<name>MTAP_KORVE</name>
<comment type="function">
    <text evidence="1">Catalyzes the reversible phosphorylation of S-methyl-5'-thioadenosine (MTA) to adenine and 5-methylthioribose-1-phosphate. Involved in the breakdown of MTA, a major by-product of polyamine biosynthesis. Responsible for the first step in the methionine salvage pathway after MTA has been generated from S-adenosylmethionine. Has broad substrate specificity with 6-aminopurine nucleosides as preferred substrates.</text>
</comment>
<comment type="catalytic activity">
    <reaction evidence="1">
        <text>S-methyl-5'-thioadenosine + phosphate = 5-(methylsulfanyl)-alpha-D-ribose 1-phosphate + adenine</text>
        <dbReference type="Rhea" id="RHEA:11852"/>
        <dbReference type="ChEBI" id="CHEBI:16708"/>
        <dbReference type="ChEBI" id="CHEBI:17509"/>
        <dbReference type="ChEBI" id="CHEBI:43474"/>
        <dbReference type="ChEBI" id="CHEBI:58533"/>
        <dbReference type="EC" id="2.4.2.28"/>
    </reaction>
</comment>
<comment type="pathway">
    <text evidence="1">Amino-acid biosynthesis; L-methionine biosynthesis via salvage pathway; S-methyl-5-thio-alpha-D-ribose 1-phosphate from S-methyl-5'-thioadenosine (phosphorylase route): step 1/1.</text>
</comment>
<comment type="subunit">
    <text evidence="1">Homohexamer. Dimer of a homotrimer.</text>
</comment>
<comment type="similarity">
    <text evidence="1">Belongs to the PNP/MTAP phosphorylase family. MTAP subfamily.</text>
</comment>
<accession>Q1INC3</accession>
<keyword id="KW-0328">Glycosyltransferase</keyword>
<keyword id="KW-0660">Purine salvage</keyword>
<keyword id="KW-1185">Reference proteome</keyword>
<keyword id="KW-0808">Transferase</keyword>
<protein>
    <recommendedName>
        <fullName evidence="1">S-methyl-5'-thioadenosine phosphorylase</fullName>
        <ecNumber evidence="1">2.4.2.28</ecNumber>
    </recommendedName>
    <alternativeName>
        <fullName evidence="1">5'-methylthioadenosine phosphorylase</fullName>
        <shortName evidence="1">MTA phosphorylase</shortName>
        <shortName evidence="1">MTAP</shortName>
    </alternativeName>
</protein>
<feature type="chain" id="PRO_0000415094" description="S-methyl-5'-thioadenosine phosphorylase">
    <location>
        <begin position="1"/>
        <end position="292"/>
    </location>
</feature>
<feature type="binding site" evidence="1">
    <location>
        <position position="11"/>
    </location>
    <ligand>
        <name>phosphate</name>
        <dbReference type="ChEBI" id="CHEBI:43474"/>
    </ligand>
</feature>
<feature type="binding site" evidence="1">
    <location>
        <begin position="53"/>
        <end position="54"/>
    </location>
    <ligand>
        <name>phosphate</name>
        <dbReference type="ChEBI" id="CHEBI:43474"/>
    </ligand>
</feature>
<feature type="binding site" evidence="1">
    <location>
        <begin position="86"/>
        <end position="87"/>
    </location>
    <ligand>
        <name>phosphate</name>
        <dbReference type="ChEBI" id="CHEBI:43474"/>
    </ligand>
</feature>
<feature type="binding site" evidence="1">
    <location>
        <position position="184"/>
    </location>
    <ligand>
        <name>substrate</name>
    </ligand>
</feature>
<feature type="binding site" evidence="1">
    <location>
        <position position="185"/>
    </location>
    <ligand>
        <name>phosphate</name>
        <dbReference type="ChEBI" id="CHEBI:43474"/>
    </ligand>
</feature>
<feature type="binding site" evidence="1">
    <location>
        <begin position="208"/>
        <end position="210"/>
    </location>
    <ligand>
        <name>substrate</name>
    </ligand>
</feature>
<feature type="site" description="Important for substrate specificity" evidence="1">
    <location>
        <position position="166"/>
    </location>
</feature>
<feature type="site" description="Important for substrate specificity" evidence="1">
    <location>
        <position position="221"/>
    </location>
</feature>
<dbReference type="EC" id="2.4.2.28" evidence="1"/>
<dbReference type="EMBL" id="CP000360">
    <property type="protein sequence ID" value="ABF41627.1"/>
    <property type="molecule type" value="Genomic_DNA"/>
</dbReference>
<dbReference type="RefSeq" id="WP_011523428.1">
    <property type="nucleotide sequence ID" value="NC_008009.1"/>
</dbReference>
<dbReference type="SMR" id="Q1INC3"/>
<dbReference type="STRING" id="204669.Acid345_2626"/>
<dbReference type="EnsemblBacteria" id="ABF41627">
    <property type="protein sequence ID" value="ABF41627"/>
    <property type="gene ID" value="Acid345_2626"/>
</dbReference>
<dbReference type="KEGG" id="aba:Acid345_2626"/>
<dbReference type="eggNOG" id="COG0005">
    <property type="taxonomic scope" value="Bacteria"/>
</dbReference>
<dbReference type="HOGENOM" id="CLU_054456_0_1_0"/>
<dbReference type="OrthoDB" id="1523230at2"/>
<dbReference type="UniPathway" id="UPA00904">
    <property type="reaction ID" value="UER00873"/>
</dbReference>
<dbReference type="Proteomes" id="UP000002432">
    <property type="component" value="Chromosome"/>
</dbReference>
<dbReference type="GO" id="GO:0005829">
    <property type="term" value="C:cytosol"/>
    <property type="evidence" value="ECO:0007669"/>
    <property type="project" value="TreeGrafter"/>
</dbReference>
<dbReference type="GO" id="GO:0017061">
    <property type="term" value="F:S-methyl-5-thioadenosine phosphorylase activity"/>
    <property type="evidence" value="ECO:0007669"/>
    <property type="project" value="UniProtKB-UniRule"/>
</dbReference>
<dbReference type="GO" id="GO:0019509">
    <property type="term" value="P:L-methionine salvage from methylthioadenosine"/>
    <property type="evidence" value="ECO:0007669"/>
    <property type="project" value="UniProtKB-UniRule"/>
</dbReference>
<dbReference type="GO" id="GO:0006166">
    <property type="term" value="P:purine ribonucleoside salvage"/>
    <property type="evidence" value="ECO:0007669"/>
    <property type="project" value="UniProtKB-KW"/>
</dbReference>
<dbReference type="CDD" id="cd09010">
    <property type="entry name" value="MTAP_SsMTAPII_like_MTIP"/>
    <property type="match status" value="1"/>
</dbReference>
<dbReference type="FunFam" id="3.40.50.1580:FF:000012">
    <property type="entry name" value="Probable 6-oxopurine nucleoside phosphorylase"/>
    <property type="match status" value="1"/>
</dbReference>
<dbReference type="Gene3D" id="3.40.50.1580">
    <property type="entry name" value="Nucleoside phosphorylase domain"/>
    <property type="match status" value="1"/>
</dbReference>
<dbReference type="HAMAP" id="MF_01963">
    <property type="entry name" value="MTAP"/>
    <property type="match status" value="1"/>
</dbReference>
<dbReference type="InterPro" id="IPR010044">
    <property type="entry name" value="MTAP"/>
</dbReference>
<dbReference type="InterPro" id="IPR000845">
    <property type="entry name" value="Nucleoside_phosphorylase_d"/>
</dbReference>
<dbReference type="InterPro" id="IPR035994">
    <property type="entry name" value="Nucleoside_phosphorylase_sf"/>
</dbReference>
<dbReference type="NCBIfam" id="TIGR01694">
    <property type="entry name" value="MTAP"/>
    <property type="match status" value="1"/>
</dbReference>
<dbReference type="PANTHER" id="PTHR42679">
    <property type="entry name" value="S-METHYL-5'-THIOADENOSINE PHOSPHORYLASE"/>
    <property type="match status" value="1"/>
</dbReference>
<dbReference type="PANTHER" id="PTHR42679:SF2">
    <property type="entry name" value="S-METHYL-5'-THIOADENOSINE PHOSPHORYLASE"/>
    <property type="match status" value="1"/>
</dbReference>
<dbReference type="Pfam" id="PF01048">
    <property type="entry name" value="PNP_UDP_1"/>
    <property type="match status" value="1"/>
</dbReference>
<dbReference type="SUPFAM" id="SSF53167">
    <property type="entry name" value="Purine and uridine phosphorylases"/>
    <property type="match status" value="1"/>
</dbReference>
<gene>
    <name evidence="1" type="primary">mtnP</name>
    <name type="ordered locus">Acid345_2626</name>
</gene>
<evidence type="ECO:0000255" key="1">
    <source>
        <dbReference type="HAMAP-Rule" id="MF_01963"/>
    </source>
</evidence>
<reference key="1">
    <citation type="journal article" date="2009" name="Appl. Environ. Microbiol.">
        <title>Three genomes from the phylum Acidobacteria provide insight into the lifestyles of these microorganisms in soils.</title>
        <authorList>
            <person name="Ward N.L."/>
            <person name="Challacombe J.F."/>
            <person name="Janssen P.H."/>
            <person name="Henrissat B."/>
            <person name="Coutinho P.M."/>
            <person name="Wu M."/>
            <person name="Xie G."/>
            <person name="Haft D.H."/>
            <person name="Sait M."/>
            <person name="Badger J."/>
            <person name="Barabote R.D."/>
            <person name="Bradley B."/>
            <person name="Brettin T.S."/>
            <person name="Brinkac L.M."/>
            <person name="Bruce D."/>
            <person name="Creasy T."/>
            <person name="Daugherty S.C."/>
            <person name="Davidsen T.M."/>
            <person name="DeBoy R.T."/>
            <person name="Detter J.C."/>
            <person name="Dodson R.J."/>
            <person name="Durkin A.S."/>
            <person name="Ganapathy A."/>
            <person name="Gwinn-Giglio M."/>
            <person name="Han C.S."/>
            <person name="Khouri H."/>
            <person name="Kiss H."/>
            <person name="Kothari S.P."/>
            <person name="Madupu R."/>
            <person name="Nelson K.E."/>
            <person name="Nelson W.C."/>
            <person name="Paulsen I."/>
            <person name="Penn K."/>
            <person name="Ren Q."/>
            <person name="Rosovitz M.J."/>
            <person name="Selengut J.D."/>
            <person name="Shrivastava S."/>
            <person name="Sullivan S.A."/>
            <person name="Tapia R."/>
            <person name="Thompson L.S."/>
            <person name="Watkins K.L."/>
            <person name="Yang Q."/>
            <person name="Yu C."/>
            <person name="Zafar N."/>
            <person name="Zhou L."/>
            <person name="Kuske C.R."/>
        </authorList>
    </citation>
    <scope>NUCLEOTIDE SEQUENCE [LARGE SCALE GENOMIC DNA]</scope>
    <source>
        <strain>Ellin345</strain>
    </source>
</reference>
<proteinExistence type="inferred from homology"/>
<organism>
    <name type="scientific">Koribacter versatilis (strain Ellin345)</name>
    <dbReference type="NCBI Taxonomy" id="204669"/>
    <lineage>
        <taxon>Bacteria</taxon>
        <taxon>Pseudomonadati</taxon>
        <taxon>Acidobacteriota</taxon>
        <taxon>Terriglobia</taxon>
        <taxon>Terriglobales</taxon>
        <taxon>Candidatus Korobacteraceae</taxon>
        <taxon>Candidatus Korobacter</taxon>
    </lineage>
</organism>
<sequence>MQAEIGIIGGSGLYSMPGVSDVQEVRVTTPFGEPSDPYVLGTLAGRKVAFLARHGRGHRLLPTELNFRANIHGFKQLGVERIISVSAVGSLKEEHRPLEFVIPDQFYDRTKQRVSTFFGEGIVAHVGFGDPVCGEMAKVVKHATDKAGVVAKAGGTYVCMEGPQFSTKAESNLYRSWGFDVIGMTNLQEAKLAREAELCYVTVAMVTDYDCWHPDHDAVTVDQIVAVLLKNAENACSVVREAVAAMPKDRTCKCGSALATAIITNKDVVPAATKEKLKLIIGKYFGEQKAGA</sequence>